<dbReference type="EMBL" id="CP000285">
    <property type="protein sequence ID" value="ABE58698.1"/>
    <property type="molecule type" value="Genomic_DNA"/>
</dbReference>
<dbReference type="RefSeq" id="WP_011506644.1">
    <property type="nucleotide sequence ID" value="NC_007963.1"/>
</dbReference>
<dbReference type="SMR" id="Q1QXW0"/>
<dbReference type="STRING" id="290398.Csal_1343"/>
<dbReference type="GeneID" id="95334081"/>
<dbReference type="KEGG" id="csa:Csal_1343"/>
<dbReference type="eggNOG" id="COG3130">
    <property type="taxonomic scope" value="Bacteria"/>
</dbReference>
<dbReference type="HOGENOM" id="CLU_203350_0_0_6"/>
<dbReference type="OrthoDB" id="5917763at2"/>
<dbReference type="Proteomes" id="UP000000239">
    <property type="component" value="Chromosome"/>
</dbReference>
<dbReference type="GO" id="GO:0005737">
    <property type="term" value="C:cytoplasm"/>
    <property type="evidence" value="ECO:0007669"/>
    <property type="project" value="UniProtKB-SubCell"/>
</dbReference>
<dbReference type="GO" id="GO:0006417">
    <property type="term" value="P:regulation of translation"/>
    <property type="evidence" value="ECO:0007669"/>
    <property type="project" value="UniProtKB-UniRule"/>
</dbReference>
<dbReference type="Gene3D" id="1.10.10.620">
    <property type="entry name" value="ribosome modulation factor like domain"/>
    <property type="match status" value="1"/>
</dbReference>
<dbReference type="HAMAP" id="MF_00919">
    <property type="entry name" value="RMF"/>
    <property type="match status" value="1"/>
</dbReference>
<dbReference type="InterPro" id="IPR007040">
    <property type="entry name" value="Ribosome_modulation_factor"/>
</dbReference>
<dbReference type="InterPro" id="IPR023200">
    <property type="entry name" value="RMF_sf"/>
</dbReference>
<dbReference type="NCBIfam" id="NF011162">
    <property type="entry name" value="PRK14563.1"/>
    <property type="match status" value="1"/>
</dbReference>
<dbReference type="NCBIfam" id="NF041886">
    <property type="entry name" value="Rmf_CrpP_fam"/>
    <property type="match status" value="1"/>
</dbReference>
<dbReference type="Pfam" id="PF04957">
    <property type="entry name" value="RMF"/>
    <property type="match status" value="1"/>
</dbReference>
<organism>
    <name type="scientific">Chromohalobacter salexigens (strain ATCC BAA-138 / DSM 3043 / CIP 106854 / NCIMB 13768 / 1H11)</name>
    <dbReference type="NCBI Taxonomy" id="290398"/>
    <lineage>
        <taxon>Bacteria</taxon>
        <taxon>Pseudomonadati</taxon>
        <taxon>Pseudomonadota</taxon>
        <taxon>Gammaproteobacteria</taxon>
        <taxon>Oceanospirillales</taxon>
        <taxon>Halomonadaceae</taxon>
        <taxon>Chromohalobacter</taxon>
    </lineage>
</organism>
<gene>
    <name evidence="1" type="primary">rmf</name>
    <name type="ordered locus">Csal_1343</name>
</gene>
<keyword id="KW-0963">Cytoplasm</keyword>
<keyword id="KW-1185">Reference proteome</keyword>
<keyword id="KW-0810">Translation regulation</keyword>
<proteinExistence type="inferred from homology"/>
<protein>
    <recommendedName>
        <fullName evidence="1">Ribosome modulation factor</fullName>
        <shortName evidence="1">RMF</shortName>
    </recommendedName>
</protein>
<reference key="1">
    <citation type="journal article" date="2011" name="Stand. Genomic Sci.">
        <title>Complete genome sequence of the halophilic and highly halotolerant Chromohalobacter salexigens type strain (1H11(T)).</title>
        <authorList>
            <person name="Copeland A."/>
            <person name="O'Connor K."/>
            <person name="Lucas S."/>
            <person name="Lapidus A."/>
            <person name="Berry K.W."/>
            <person name="Detter J.C."/>
            <person name="Del Rio T.G."/>
            <person name="Hammon N."/>
            <person name="Dalin E."/>
            <person name="Tice H."/>
            <person name="Pitluck S."/>
            <person name="Bruce D."/>
            <person name="Goodwin L."/>
            <person name="Han C."/>
            <person name="Tapia R."/>
            <person name="Saunders E."/>
            <person name="Schmutz J."/>
            <person name="Brettin T."/>
            <person name="Larimer F."/>
            <person name="Land M."/>
            <person name="Hauser L."/>
            <person name="Vargas C."/>
            <person name="Nieto J.J."/>
            <person name="Kyrpides N.C."/>
            <person name="Ivanova N."/>
            <person name="Goker M."/>
            <person name="Klenk H.P."/>
            <person name="Csonka L.N."/>
            <person name="Woyke T."/>
        </authorList>
    </citation>
    <scope>NUCLEOTIDE SEQUENCE [LARGE SCALE GENOMIC DNA]</scope>
    <source>
        <strain>ATCC BAA-138 / DSM 3043 / CIP 106854 / NCIMB 13768 / 1H11</strain>
    </source>
</reference>
<evidence type="ECO:0000255" key="1">
    <source>
        <dbReference type="HAMAP-Rule" id="MF_00919"/>
    </source>
</evidence>
<feature type="chain" id="PRO_0000416470" description="Ribosome modulation factor">
    <location>
        <begin position="1"/>
        <end position="69"/>
    </location>
</feature>
<name>RMF_CHRSD</name>
<sequence>MKRQKRDRFQRAYVHGYKAGMTGRSRDDCPSQDINLREYWMSGWREGRGDQWAGMTGISGIHKNPMVLS</sequence>
<accession>Q1QXW0</accession>
<comment type="function">
    <text evidence="1">During stationary phase, converts 70S ribosomes to an inactive dimeric form (100S ribosomes).</text>
</comment>
<comment type="subcellular location">
    <subcellularLocation>
        <location evidence="1">Cytoplasm</location>
    </subcellularLocation>
</comment>
<comment type="similarity">
    <text evidence="1">Belongs to the ribosome modulation factor family.</text>
</comment>